<keyword id="KW-1003">Cell membrane</keyword>
<keyword id="KW-1015">Disulfide bond</keyword>
<keyword id="KW-0325">Glycoprotein</keyword>
<keyword id="KW-0336">GPI-anchor</keyword>
<keyword id="KW-0449">Lipoprotein</keyword>
<keyword id="KW-0472">Membrane</keyword>
<keyword id="KW-1185">Reference proteome</keyword>
<keyword id="KW-0732">Signal</keyword>
<sequence>MASSSLLVTIFLCISVFFFSSVNANEVTVGGKSGDWKIPPSSSFSFNEWAQKARFKVGDFIVFKYEAGKDSVLQVTREAYEKCNTTSPKASYTDGNTKVKLDQAGPVYFVSGTEGHCQKGQKLRLVVITPRNSAFSPGPSPSEFDGPAVAPTSGAAKLAGGFSVVFGLVLGLWAFFF</sequence>
<evidence type="ECO:0000255" key="1"/>
<evidence type="ECO:0000255" key="2">
    <source>
        <dbReference type="PROSITE-ProRule" id="PRU00498"/>
    </source>
</evidence>
<evidence type="ECO:0000255" key="3">
    <source>
        <dbReference type="PROSITE-ProRule" id="PRU00818"/>
    </source>
</evidence>
<evidence type="ECO:0000269" key="4">
    <source>
    </source>
</evidence>
<evidence type="ECO:0000269" key="5">
    <source>
    </source>
</evidence>
<evidence type="ECO:0000269" key="6">
    <source>
    </source>
</evidence>
<evidence type="ECO:0000303" key="7">
    <source>
    </source>
</evidence>
<evidence type="ECO:0000303" key="8">
    <source>
    </source>
</evidence>
<evidence type="ECO:0000305" key="9"/>
<evidence type="ECO:0000312" key="10">
    <source>
        <dbReference type="Araport" id="AT4G31840"/>
    </source>
</evidence>
<evidence type="ECO:0000312" key="11">
    <source>
        <dbReference type="EMBL" id="CAB40754.1"/>
    </source>
</evidence>
<proteinExistence type="evidence at protein level"/>
<gene>
    <name evidence="7" type="primary">ENODL15</name>
    <name evidence="7" type="synonym">EN15</name>
    <name evidence="10" type="ordered locus">At4g31840</name>
    <name evidence="11" type="ORF">F11C18.40</name>
</gene>
<organism>
    <name type="scientific">Arabidopsis thaliana</name>
    <name type="common">Mouse-ear cress</name>
    <dbReference type="NCBI Taxonomy" id="3702"/>
    <lineage>
        <taxon>Eukaryota</taxon>
        <taxon>Viridiplantae</taxon>
        <taxon>Streptophyta</taxon>
        <taxon>Embryophyta</taxon>
        <taxon>Tracheophyta</taxon>
        <taxon>Spermatophyta</taxon>
        <taxon>Magnoliopsida</taxon>
        <taxon>eudicotyledons</taxon>
        <taxon>Gunneridae</taxon>
        <taxon>Pentapetalae</taxon>
        <taxon>rosids</taxon>
        <taxon>malvids</taxon>
        <taxon>Brassicales</taxon>
        <taxon>Brassicaceae</taxon>
        <taxon>Camelineae</taxon>
        <taxon>Arabidopsis</taxon>
    </lineage>
</organism>
<protein>
    <recommendedName>
        <fullName evidence="7">Early nodulin-like protein 15</fullName>
        <shortName evidence="7">AtENODL15</shortName>
    </recommendedName>
    <alternativeName>
        <fullName evidence="9">Phytocyanin-like protein ENODL15</fullName>
    </alternativeName>
</protein>
<name>ENL15_ARATH</name>
<reference key="1">
    <citation type="journal article" date="1999" name="Nature">
        <title>Sequence and analysis of chromosome 4 of the plant Arabidopsis thaliana.</title>
        <authorList>
            <person name="Mayer K.F.X."/>
            <person name="Schueller C."/>
            <person name="Wambutt R."/>
            <person name="Murphy G."/>
            <person name="Volckaert G."/>
            <person name="Pohl T."/>
            <person name="Duesterhoeft A."/>
            <person name="Stiekema W."/>
            <person name="Entian K.-D."/>
            <person name="Terryn N."/>
            <person name="Harris B."/>
            <person name="Ansorge W."/>
            <person name="Brandt P."/>
            <person name="Grivell L.A."/>
            <person name="Rieger M."/>
            <person name="Weichselgartner M."/>
            <person name="de Simone V."/>
            <person name="Obermaier B."/>
            <person name="Mache R."/>
            <person name="Mueller M."/>
            <person name="Kreis M."/>
            <person name="Delseny M."/>
            <person name="Puigdomenech P."/>
            <person name="Watson M."/>
            <person name="Schmidtheini T."/>
            <person name="Reichert B."/>
            <person name="Portetelle D."/>
            <person name="Perez-Alonso M."/>
            <person name="Boutry M."/>
            <person name="Bancroft I."/>
            <person name="Vos P."/>
            <person name="Hoheisel J."/>
            <person name="Zimmermann W."/>
            <person name="Wedler H."/>
            <person name="Ridley P."/>
            <person name="Langham S.-A."/>
            <person name="McCullagh B."/>
            <person name="Bilham L."/>
            <person name="Robben J."/>
            <person name="van der Schueren J."/>
            <person name="Grymonprez B."/>
            <person name="Chuang Y.-J."/>
            <person name="Vandenbussche F."/>
            <person name="Braeken M."/>
            <person name="Weltjens I."/>
            <person name="Voet M."/>
            <person name="Bastiaens I."/>
            <person name="Aert R."/>
            <person name="Defoor E."/>
            <person name="Weitzenegger T."/>
            <person name="Bothe G."/>
            <person name="Ramsperger U."/>
            <person name="Hilbert H."/>
            <person name="Braun M."/>
            <person name="Holzer E."/>
            <person name="Brandt A."/>
            <person name="Peters S."/>
            <person name="van Staveren M."/>
            <person name="Dirkse W."/>
            <person name="Mooijman P."/>
            <person name="Klein Lankhorst R."/>
            <person name="Rose M."/>
            <person name="Hauf J."/>
            <person name="Koetter P."/>
            <person name="Berneiser S."/>
            <person name="Hempel S."/>
            <person name="Feldpausch M."/>
            <person name="Lamberth S."/>
            <person name="Van den Daele H."/>
            <person name="De Keyser A."/>
            <person name="Buysshaert C."/>
            <person name="Gielen J."/>
            <person name="Villarroel R."/>
            <person name="De Clercq R."/>
            <person name="van Montagu M."/>
            <person name="Rogers J."/>
            <person name="Cronin A."/>
            <person name="Quail M.A."/>
            <person name="Bray-Allen S."/>
            <person name="Clark L."/>
            <person name="Doggett J."/>
            <person name="Hall S."/>
            <person name="Kay M."/>
            <person name="Lennard N."/>
            <person name="McLay K."/>
            <person name="Mayes R."/>
            <person name="Pettett A."/>
            <person name="Rajandream M.A."/>
            <person name="Lyne M."/>
            <person name="Benes V."/>
            <person name="Rechmann S."/>
            <person name="Borkova D."/>
            <person name="Bloecker H."/>
            <person name="Scharfe M."/>
            <person name="Grimm M."/>
            <person name="Loehnert T.-H."/>
            <person name="Dose S."/>
            <person name="de Haan M."/>
            <person name="Maarse A.C."/>
            <person name="Schaefer M."/>
            <person name="Mueller-Auer S."/>
            <person name="Gabel C."/>
            <person name="Fuchs M."/>
            <person name="Fartmann B."/>
            <person name="Granderath K."/>
            <person name="Dauner D."/>
            <person name="Herzl A."/>
            <person name="Neumann S."/>
            <person name="Argiriou A."/>
            <person name="Vitale D."/>
            <person name="Liguori R."/>
            <person name="Piravandi E."/>
            <person name="Massenet O."/>
            <person name="Quigley F."/>
            <person name="Clabauld G."/>
            <person name="Muendlein A."/>
            <person name="Felber R."/>
            <person name="Schnabl S."/>
            <person name="Hiller R."/>
            <person name="Schmidt W."/>
            <person name="Lecharny A."/>
            <person name="Aubourg S."/>
            <person name="Chefdor F."/>
            <person name="Cooke R."/>
            <person name="Berger C."/>
            <person name="Monfort A."/>
            <person name="Casacuberta E."/>
            <person name="Gibbons T."/>
            <person name="Weber N."/>
            <person name="Vandenbol M."/>
            <person name="Bargues M."/>
            <person name="Terol J."/>
            <person name="Torres A."/>
            <person name="Perez-Perez A."/>
            <person name="Purnelle B."/>
            <person name="Bent E."/>
            <person name="Johnson S."/>
            <person name="Tacon D."/>
            <person name="Jesse T."/>
            <person name="Heijnen L."/>
            <person name="Schwarz S."/>
            <person name="Scholler P."/>
            <person name="Heber S."/>
            <person name="Francs P."/>
            <person name="Bielke C."/>
            <person name="Frishman D."/>
            <person name="Haase D."/>
            <person name="Lemcke K."/>
            <person name="Mewes H.-W."/>
            <person name="Stocker S."/>
            <person name="Zaccaria P."/>
            <person name="Bevan M."/>
            <person name="Wilson R.K."/>
            <person name="de la Bastide M."/>
            <person name="Habermann K."/>
            <person name="Parnell L."/>
            <person name="Dedhia N."/>
            <person name="Gnoj L."/>
            <person name="Schutz K."/>
            <person name="Huang E."/>
            <person name="Spiegel L."/>
            <person name="Sekhon M."/>
            <person name="Murray J."/>
            <person name="Sheet P."/>
            <person name="Cordes M."/>
            <person name="Abu-Threideh J."/>
            <person name="Stoneking T."/>
            <person name="Kalicki J."/>
            <person name="Graves T."/>
            <person name="Harmon G."/>
            <person name="Edwards J."/>
            <person name="Latreille P."/>
            <person name="Courtney L."/>
            <person name="Cloud J."/>
            <person name="Abbott A."/>
            <person name="Scott K."/>
            <person name="Johnson D."/>
            <person name="Minx P."/>
            <person name="Bentley D."/>
            <person name="Fulton B."/>
            <person name="Miller N."/>
            <person name="Greco T."/>
            <person name="Kemp K."/>
            <person name="Kramer J."/>
            <person name="Fulton L."/>
            <person name="Mardis E."/>
            <person name="Dante M."/>
            <person name="Pepin K."/>
            <person name="Hillier L.W."/>
            <person name="Nelson J."/>
            <person name="Spieth J."/>
            <person name="Ryan E."/>
            <person name="Andrews S."/>
            <person name="Geisel C."/>
            <person name="Layman D."/>
            <person name="Du H."/>
            <person name="Ali J."/>
            <person name="Berghoff A."/>
            <person name="Jones K."/>
            <person name="Drone K."/>
            <person name="Cotton M."/>
            <person name="Joshu C."/>
            <person name="Antonoiu B."/>
            <person name="Zidanic M."/>
            <person name="Strong C."/>
            <person name="Sun H."/>
            <person name="Lamar B."/>
            <person name="Yordan C."/>
            <person name="Ma P."/>
            <person name="Zhong J."/>
            <person name="Preston R."/>
            <person name="Vil D."/>
            <person name="Shekher M."/>
            <person name="Matero A."/>
            <person name="Shah R."/>
            <person name="Swaby I.K."/>
            <person name="O'Shaughnessy A."/>
            <person name="Rodriguez M."/>
            <person name="Hoffman J."/>
            <person name="Till S."/>
            <person name="Granat S."/>
            <person name="Shohdy N."/>
            <person name="Hasegawa A."/>
            <person name="Hameed A."/>
            <person name="Lodhi M."/>
            <person name="Johnson A."/>
            <person name="Chen E."/>
            <person name="Marra M.A."/>
            <person name="Martienssen R."/>
            <person name="McCombie W.R."/>
        </authorList>
    </citation>
    <scope>NUCLEOTIDE SEQUENCE [LARGE SCALE GENOMIC DNA]</scope>
    <source>
        <strain>cv. Columbia</strain>
    </source>
</reference>
<reference key="2">
    <citation type="journal article" date="2017" name="Plant J.">
        <title>Araport11: a complete reannotation of the Arabidopsis thaliana reference genome.</title>
        <authorList>
            <person name="Cheng C.Y."/>
            <person name="Krishnakumar V."/>
            <person name="Chan A.P."/>
            <person name="Thibaud-Nissen F."/>
            <person name="Schobel S."/>
            <person name="Town C.D."/>
        </authorList>
    </citation>
    <scope>GENOME REANNOTATION</scope>
    <source>
        <strain>cv. Columbia</strain>
    </source>
</reference>
<reference key="3">
    <citation type="journal article" date="2003" name="Science">
        <title>Empirical analysis of transcriptional activity in the Arabidopsis genome.</title>
        <authorList>
            <person name="Yamada K."/>
            <person name="Lim J."/>
            <person name="Dale J.M."/>
            <person name="Chen H."/>
            <person name="Shinn P."/>
            <person name="Palm C.J."/>
            <person name="Southwick A.M."/>
            <person name="Wu H.C."/>
            <person name="Kim C.J."/>
            <person name="Nguyen M."/>
            <person name="Pham P.K."/>
            <person name="Cheuk R.F."/>
            <person name="Karlin-Newmann G."/>
            <person name="Liu S.X."/>
            <person name="Lam B."/>
            <person name="Sakano H."/>
            <person name="Wu T."/>
            <person name="Yu G."/>
            <person name="Miranda M."/>
            <person name="Quach H.L."/>
            <person name="Tripp M."/>
            <person name="Chang C.H."/>
            <person name="Lee J.M."/>
            <person name="Toriumi M.J."/>
            <person name="Chan M.M."/>
            <person name="Tang C.C."/>
            <person name="Onodera C.S."/>
            <person name="Deng J.M."/>
            <person name="Akiyama K."/>
            <person name="Ansari Y."/>
            <person name="Arakawa T."/>
            <person name="Banh J."/>
            <person name="Banno F."/>
            <person name="Bowser L."/>
            <person name="Brooks S.Y."/>
            <person name="Carninci P."/>
            <person name="Chao Q."/>
            <person name="Choy N."/>
            <person name="Enju A."/>
            <person name="Goldsmith A.D."/>
            <person name="Gurjal M."/>
            <person name="Hansen N.F."/>
            <person name="Hayashizaki Y."/>
            <person name="Johnson-Hopson C."/>
            <person name="Hsuan V.W."/>
            <person name="Iida K."/>
            <person name="Karnes M."/>
            <person name="Khan S."/>
            <person name="Koesema E."/>
            <person name="Ishida J."/>
            <person name="Jiang P.X."/>
            <person name="Jones T."/>
            <person name="Kawai J."/>
            <person name="Kamiya A."/>
            <person name="Meyers C."/>
            <person name="Nakajima M."/>
            <person name="Narusaka M."/>
            <person name="Seki M."/>
            <person name="Sakurai T."/>
            <person name="Satou M."/>
            <person name="Tamse R."/>
            <person name="Vaysberg M."/>
            <person name="Wallender E.K."/>
            <person name="Wong C."/>
            <person name="Yamamura Y."/>
            <person name="Yuan S."/>
            <person name="Shinozaki K."/>
            <person name="Davis R.W."/>
            <person name="Theologis A."/>
            <person name="Ecker J.R."/>
        </authorList>
    </citation>
    <scope>NUCLEOTIDE SEQUENCE [LARGE SCALE MRNA]</scope>
    <source>
        <strain>cv. Columbia</strain>
    </source>
</reference>
<reference key="4">
    <citation type="submission" date="2002-03" db="EMBL/GenBank/DDBJ databases">
        <title>Full-length cDNA from Arabidopsis thaliana.</title>
        <authorList>
            <person name="Brover V.V."/>
            <person name="Troukhan M.E."/>
            <person name="Alexandrov N.A."/>
            <person name="Lu Y.-P."/>
            <person name="Flavell R.B."/>
            <person name="Feldmann K.A."/>
        </authorList>
    </citation>
    <scope>NUCLEOTIDE SEQUENCE [LARGE SCALE MRNA]</scope>
</reference>
<reference key="5">
    <citation type="journal article" date="2003" name="Plant Physiol.">
        <title>Identification of glycosylphosphatidylinositol-anchored proteins in Arabidopsis. A proteomic and genomic analysis.</title>
        <authorList>
            <person name="Borner G.H.H."/>
            <person name="Lilley K.S."/>
            <person name="Stevens T.J."/>
            <person name="Dupree P."/>
        </authorList>
    </citation>
    <scope>GENE FAMILY</scope>
    <source>
        <strain>cv. Columbia</strain>
    </source>
</reference>
<reference key="6">
    <citation type="journal article" date="2007" name="Plant Physiol.">
        <title>An early nodulin-like protein accumulates in the sieve element plasma membrane of Arabidopsis.</title>
        <authorList>
            <person name="Khan J.A."/>
            <person name="Wang Q."/>
            <person name="Sjoelund R.D."/>
            <person name="Schulz A."/>
            <person name="Thompson G.A."/>
        </authorList>
    </citation>
    <scope>DEVELOPMENTAL STAGE</scope>
    <scope>TISSUE SPECIFICITY</scope>
</reference>
<reference key="7">
    <citation type="journal article" date="2009" name="Biosci. Biotechnol. Biochem.">
        <title>Genome-wide identification, structure and expression studies, and mutant collection of 22 early nodulin-like protein genes in Arabidopsis.</title>
        <authorList>
            <person name="Mashiguchi K."/>
            <person name="Asami T."/>
            <person name="Suzuki Y."/>
        </authorList>
    </citation>
    <scope>TISSUE SPECIFICITY</scope>
    <scope>GENE FAMILY</scope>
    <scope>NOMENCLATURE</scope>
    <source>
        <strain>cv. Columbia</strain>
    </source>
</reference>
<reference key="8">
    <citation type="journal article" date="2014" name="Plant Cell Physiol.">
        <title>Emerging functions of nodulin-like proteins in non-nodulating plant species.</title>
        <authorList>
            <person name="Denance N."/>
            <person name="Szurek B."/>
            <person name="Noel L.D."/>
        </authorList>
    </citation>
    <scope>REVIEW ON NODULIN-LIKE PROTEINS</scope>
</reference>
<reference key="9">
    <citation type="journal article" date="2016" name="Curr. Biol.">
        <title>Maternal ENODLs are required for pollen tube reception in Arabidopsis.</title>
        <authorList>
            <person name="Hou Y."/>
            <person name="Guo X."/>
            <person name="Cyprys P."/>
            <person name="Zhang Y."/>
            <person name="Bleckmann A."/>
            <person name="Cai L."/>
            <person name="Huang Q."/>
            <person name="Luo Y."/>
            <person name="Gu H."/>
            <person name="Dresselhaus T."/>
            <person name="Dong J."/>
            <person name="Qu L.-J."/>
        </authorList>
    </citation>
    <scope>FUNCTION</scope>
    <scope>DISRUPTION PHENOTYPE</scope>
    <scope>DEVELOPMENTAL STAGE</scope>
    <scope>SUBCELLULAR LOCATION</scope>
</reference>
<feature type="signal peptide" evidence="1">
    <location>
        <begin position="1"/>
        <end position="24"/>
    </location>
</feature>
<feature type="chain" id="PRO_5014313343" description="Early nodulin-like protein 15">
    <location>
        <begin position="25"/>
        <end position="153"/>
    </location>
</feature>
<feature type="propeptide" id="PRO_0000457745" description="Removed in mature form" evidence="1">
    <location>
        <begin position="154"/>
        <end position="177"/>
    </location>
</feature>
<feature type="domain" description="Phytocyanin" evidence="3">
    <location>
        <begin position="25"/>
        <end position="129"/>
    </location>
</feature>
<feature type="lipid moiety-binding region" description="GPI-anchor amidated serine" evidence="1">
    <location>
        <position position="153"/>
    </location>
</feature>
<feature type="glycosylation site" description="N-linked (GlcNAc...) asparagine" evidence="2">
    <location>
        <position position="84"/>
    </location>
</feature>
<feature type="disulfide bond" evidence="3">
    <location>
        <begin position="83"/>
        <end position="117"/>
    </location>
</feature>
<accession>Q9SZ51</accession>
<comment type="function">
    <text evidence="6 8">May act as a carbohydrate transporter (PubMed:24470637). Required, together with ENODL11, ENODL12, ENODL13, ENODL14 and ENODL15, for male-female communication and pollen tube reception and burst at the synergid cell surface of the female gametophyte (PubMed:27524487).</text>
</comment>
<comment type="subcellular location">
    <subcellularLocation>
        <location evidence="6">Cell membrane</location>
        <topology evidence="1">Lipid-anchor</topology>
        <topology evidence="1">GPI-anchor</topology>
    </subcellularLocation>
</comment>
<comment type="tissue specificity">
    <text evidence="4 5">Mostly expressed in seedlings, siliques and flowers, and, to a lower extent, in roots, stems and seeds, but barely in leaves.</text>
</comment>
<comment type="developmental stage">
    <text evidence="4 6">In flowers, expressed in anthers, pollen and developing ovules (PubMed:17293437). In inflorescences, accumulates mainly in mature pistils (PubMed:27524487). In developing ovules, observed at the micropylar region in a polarized localization of the synergid cells and in inner integument surrounding the female gametophytes (at protein level) (PubMed:27524487). In mature ovules, present in the filiform apparatus and in the integuments at the micropylar region (PubMed:27524487). At later developmental stages, localization shifts from the micropyle toward the chalazal end (PubMed:27524487). Also present in the funiculus and at the junctions between the transmitting tissue and the funiculus (PubMed:27524487). Levels fade out in ovules after pollination and subsequent fertilization (PubMed:27524487).</text>
</comment>
<comment type="disruption phenotype">
    <text evidence="6">No visible phenotype (PubMed:27524487). Plants lacking ENODL11, ENODL12, ENODL13, ENODL14 and ENODL15 have a reduced seed set due to aborted ovules as a result of pollen tubes failling to rupture and release their sperm cell cargo (PubMed:27524487).</text>
</comment>
<comment type="similarity">
    <text evidence="9">Belongs to the early nodulin-like (ENODL) family.</text>
</comment>
<dbReference type="EMBL" id="AL049607">
    <property type="protein sequence ID" value="CAB40754.1"/>
    <property type="molecule type" value="Genomic_DNA"/>
</dbReference>
<dbReference type="EMBL" id="AL161579">
    <property type="protein sequence ID" value="CAB79902.1"/>
    <property type="molecule type" value="Genomic_DNA"/>
</dbReference>
<dbReference type="EMBL" id="CP002687">
    <property type="protein sequence ID" value="AEE85966.1"/>
    <property type="molecule type" value="Genomic_DNA"/>
</dbReference>
<dbReference type="EMBL" id="AY081324">
    <property type="protein sequence ID" value="AAL91213.1"/>
    <property type="molecule type" value="mRNA"/>
</dbReference>
<dbReference type="EMBL" id="BT002545">
    <property type="protein sequence ID" value="AAO00905.1"/>
    <property type="molecule type" value="mRNA"/>
</dbReference>
<dbReference type="EMBL" id="AY088377">
    <property type="protein sequence ID" value="AAM65916.1"/>
    <property type="molecule type" value="mRNA"/>
</dbReference>
<dbReference type="PIR" id="T06306">
    <property type="entry name" value="T06306"/>
</dbReference>
<dbReference type="RefSeq" id="NP_194912.1">
    <property type="nucleotide sequence ID" value="NM_119334.3"/>
</dbReference>
<dbReference type="SMR" id="Q9SZ51"/>
<dbReference type="FunCoup" id="Q9SZ51">
    <property type="interactions" value="97"/>
</dbReference>
<dbReference type="IntAct" id="Q9SZ51">
    <property type="interactions" value="45"/>
</dbReference>
<dbReference type="STRING" id="3702.Q9SZ51"/>
<dbReference type="GlyGen" id="Q9SZ51">
    <property type="glycosylation" value="3 sites, 1 O-linked glycan (1 site)"/>
</dbReference>
<dbReference type="iPTMnet" id="Q9SZ51"/>
<dbReference type="PaxDb" id="3702-AT4G31840.1"/>
<dbReference type="ProMEX" id="Q9SZ51"/>
<dbReference type="ProteomicsDB" id="187138"/>
<dbReference type="EnsemblPlants" id="AT4G31840.1">
    <property type="protein sequence ID" value="AT4G31840.1"/>
    <property type="gene ID" value="AT4G31840"/>
</dbReference>
<dbReference type="GeneID" id="829313"/>
<dbReference type="Gramene" id="AT4G31840.1">
    <property type="protein sequence ID" value="AT4G31840.1"/>
    <property type="gene ID" value="AT4G31840"/>
</dbReference>
<dbReference type="KEGG" id="ath:AT4G31840"/>
<dbReference type="Araport" id="AT4G31840"/>
<dbReference type="TAIR" id="AT4G31840">
    <property type="gene designation" value="ENODL15"/>
</dbReference>
<dbReference type="eggNOG" id="ENOG502RZS4">
    <property type="taxonomic scope" value="Eukaryota"/>
</dbReference>
<dbReference type="HOGENOM" id="CLU_058719_1_2_1"/>
<dbReference type="InParanoid" id="Q9SZ51"/>
<dbReference type="OMA" id="HTNTCEV"/>
<dbReference type="OrthoDB" id="1937044at2759"/>
<dbReference type="PRO" id="PR:Q9SZ51"/>
<dbReference type="Proteomes" id="UP000006548">
    <property type="component" value="Chromosome 4"/>
</dbReference>
<dbReference type="ExpressionAtlas" id="Q9SZ51">
    <property type="expression patterns" value="baseline and differential"/>
</dbReference>
<dbReference type="GO" id="GO:0005886">
    <property type="term" value="C:plasma membrane"/>
    <property type="evidence" value="ECO:0007005"/>
    <property type="project" value="TAIR"/>
</dbReference>
<dbReference type="GO" id="GO:0099503">
    <property type="term" value="C:secretory vesicle"/>
    <property type="evidence" value="ECO:0007005"/>
    <property type="project" value="TAIR"/>
</dbReference>
<dbReference type="GO" id="GO:0098552">
    <property type="term" value="C:side of membrane"/>
    <property type="evidence" value="ECO:0007669"/>
    <property type="project" value="UniProtKB-KW"/>
</dbReference>
<dbReference type="GO" id="GO:0009055">
    <property type="term" value="F:electron transfer activity"/>
    <property type="evidence" value="ECO:0007669"/>
    <property type="project" value="InterPro"/>
</dbReference>
<dbReference type="CDD" id="cd11019">
    <property type="entry name" value="OsENODL1_like"/>
    <property type="match status" value="1"/>
</dbReference>
<dbReference type="FunFam" id="2.60.40.420:FF:000069">
    <property type="entry name" value="Early nodulin-like protein 1"/>
    <property type="match status" value="1"/>
</dbReference>
<dbReference type="Gene3D" id="2.60.40.420">
    <property type="entry name" value="Cupredoxins - blue copper proteins"/>
    <property type="match status" value="1"/>
</dbReference>
<dbReference type="InterPro" id="IPR008972">
    <property type="entry name" value="Cupredoxin"/>
</dbReference>
<dbReference type="InterPro" id="IPR041846">
    <property type="entry name" value="ENL_dom"/>
</dbReference>
<dbReference type="InterPro" id="IPR039391">
    <property type="entry name" value="Phytocyanin-like"/>
</dbReference>
<dbReference type="InterPro" id="IPR003245">
    <property type="entry name" value="Phytocyanin_dom"/>
</dbReference>
<dbReference type="PANTHER" id="PTHR33021">
    <property type="entry name" value="BLUE COPPER PROTEIN"/>
    <property type="match status" value="1"/>
</dbReference>
<dbReference type="PANTHER" id="PTHR33021:SF366">
    <property type="entry name" value="EARLY NODULIN-LIKE PROTEIN 15"/>
    <property type="match status" value="1"/>
</dbReference>
<dbReference type="Pfam" id="PF02298">
    <property type="entry name" value="Cu_bind_like"/>
    <property type="match status" value="1"/>
</dbReference>
<dbReference type="SUPFAM" id="SSF49503">
    <property type="entry name" value="Cupredoxins"/>
    <property type="match status" value="1"/>
</dbReference>
<dbReference type="PROSITE" id="PS51485">
    <property type="entry name" value="PHYTOCYANIN"/>
    <property type="match status" value="1"/>
</dbReference>